<reference key="1">
    <citation type="journal article" date="2005" name="Mol. Biol. Evol.">
        <title>Analysis of Acorus calamus chloroplast genome and its phylogenetic implications.</title>
        <authorList>
            <person name="Goremykin V.V."/>
            <person name="Holland B."/>
            <person name="Hirsch-Ernst K.I."/>
            <person name="Hellwig F.H."/>
        </authorList>
    </citation>
    <scope>NUCLEOTIDE SEQUENCE [LARGE SCALE GENOMIC DNA]</scope>
</reference>
<name>PSBI_ACOCL</name>
<sequence>MLTLKLFVYTVVIFFVSLFIFGFLSNDPGRNPGREE</sequence>
<organism>
    <name type="scientific">Acorus calamus</name>
    <name type="common">Sweet flag</name>
    <dbReference type="NCBI Taxonomy" id="4465"/>
    <lineage>
        <taxon>Eukaryota</taxon>
        <taxon>Viridiplantae</taxon>
        <taxon>Streptophyta</taxon>
        <taxon>Embryophyta</taxon>
        <taxon>Tracheophyta</taxon>
        <taxon>Spermatophyta</taxon>
        <taxon>Magnoliopsida</taxon>
        <taxon>Liliopsida</taxon>
        <taxon>Acoraceae</taxon>
        <taxon>Acorus</taxon>
    </lineage>
</organism>
<keyword id="KW-0150">Chloroplast</keyword>
<keyword id="KW-0472">Membrane</keyword>
<keyword id="KW-0602">Photosynthesis</keyword>
<keyword id="KW-0604">Photosystem II</keyword>
<keyword id="KW-0934">Plastid</keyword>
<keyword id="KW-0674">Reaction center</keyword>
<keyword id="KW-0793">Thylakoid</keyword>
<keyword id="KW-0812">Transmembrane</keyword>
<keyword id="KW-1133">Transmembrane helix</keyword>
<proteinExistence type="inferred from homology"/>
<feature type="chain" id="PRO_0000298310" description="Photosystem II reaction center protein I">
    <location>
        <begin position="1"/>
        <end position="36"/>
    </location>
</feature>
<feature type="transmembrane region" description="Helical" evidence="1">
    <location>
        <begin position="4"/>
        <end position="24"/>
    </location>
</feature>
<accession>Q3V550</accession>
<protein>
    <recommendedName>
        <fullName evidence="1">Photosystem II reaction center protein I</fullName>
        <shortName evidence="1">PSII-I</shortName>
    </recommendedName>
    <alternativeName>
        <fullName evidence="1">PSII 4.8 kDa protein</fullName>
    </alternativeName>
</protein>
<gene>
    <name evidence="1" type="primary">psbI</name>
</gene>
<comment type="function">
    <text evidence="1">One of the components of the core complex of photosystem II (PSII), required for its stability and/or assembly. PSII is a light-driven water:plastoquinone oxidoreductase that uses light energy to abstract electrons from H(2)O, generating O(2) and a proton gradient subsequently used for ATP formation. It consists of a core antenna complex that captures photons, and an electron transfer chain that converts photonic excitation into a charge separation.</text>
</comment>
<comment type="subunit">
    <text evidence="1">PSII is composed of 1 copy each of membrane proteins PsbA, PsbB, PsbC, PsbD, PsbE, PsbF, PsbH, PsbI, PsbJ, PsbK, PsbL, PsbM, PsbT, PsbX, PsbY, PsbZ, Psb30/Ycf12, at least 3 peripheral proteins of the oxygen-evolving complex and a large number of cofactors. It forms dimeric complexes.</text>
</comment>
<comment type="subcellular location">
    <subcellularLocation>
        <location evidence="1">Plastid</location>
        <location evidence="1">Chloroplast thylakoid membrane</location>
        <topology evidence="1">Single-pass membrane protein</topology>
    </subcellularLocation>
</comment>
<comment type="similarity">
    <text evidence="1">Belongs to the PsbI family.</text>
</comment>
<dbReference type="EMBL" id="AJ879453">
    <property type="protein sequence ID" value="CAI53778.1"/>
    <property type="molecule type" value="Genomic_DNA"/>
</dbReference>
<dbReference type="RefSeq" id="YP_319749.1">
    <property type="nucleotide sequence ID" value="NC_007407.1"/>
</dbReference>
<dbReference type="SMR" id="Q3V550"/>
<dbReference type="GeneID" id="3677469"/>
<dbReference type="GO" id="GO:0009535">
    <property type="term" value="C:chloroplast thylakoid membrane"/>
    <property type="evidence" value="ECO:0007669"/>
    <property type="project" value="UniProtKB-SubCell"/>
</dbReference>
<dbReference type="GO" id="GO:0009539">
    <property type="term" value="C:photosystem II reaction center"/>
    <property type="evidence" value="ECO:0007669"/>
    <property type="project" value="InterPro"/>
</dbReference>
<dbReference type="GO" id="GO:0015979">
    <property type="term" value="P:photosynthesis"/>
    <property type="evidence" value="ECO:0007669"/>
    <property type="project" value="UniProtKB-UniRule"/>
</dbReference>
<dbReference type="HAMAP" id="MF_01316">
    <property type="entry name" value="PSII_PsbI"/>
    <property type="match status" value="1"/>
</dbReference>
<dbReference type="InterPro" id="IPR003686">
    <property type="entry name" value="PSII_PsbI"/>
</dbReference>
<dbReference type="InterPro" id="IPR037271">
    <property type="entry name" value="PSII_PsbI_sf"/>
</dbReference>
<dbReference type="NCBIfam" id="NF002735">
    <property type="entry name" value="PRK02655.1"/>
    <property type="match status" value="1"/>
</dbReference>
<dbReference type="PANTHER" id="PTHR35772">
    <property type="entry name" value="PHOTOSYSTEM II REACTION CENTER PROTEIN I"/>
    <property type="match status" value="1"/>
</dbReference>
<dbReference type="PANTHER" id="PTHR35772:SF1">
    <property type="entry name" value="PHOTOSYSTEM II REACTION CENTER PROTEIN I"/>
    <property type="match status" value="1"/>
</dbReference>
<dbReference type="Pfam" id="PF02532">
    <property type="entry name" value="PsbI"/>
    <property type="match status" value="1"/>
</dbReference>
<dbReference type="SUPFAM" id="SSF161041">
    <property type="entry name" value="Photosystem II reaction center protein I, PsbI"/>
    <property type="match status" value="1"/>
</dbReference>
<geneLocation type="chloroplast"/>
<evidence type="ECO:0000255" key="1">
    <source>
        <dbReference type="HAMAP-Rule" id="MF_01316"/>
    </source>
</evidence>